<proteinExistence type="inferred from homology"/>
<evidence type="ECO:0000255" key="1">
    <source>
        <dbReference type="HAMAP-Rule" id="MF_00293"/>
    </source>
</evidence>
<comment type="function">
    <text evidence="1">May play a role in photosystem I and II biogenesis.</text>
</comment>
<comment type="subcellular location">
    <subcellularLocation>
        <location evidence="1">Plastid</location>
        <location evidence="1">Chloroplast thylakoid membrane</location>
        <topology evidence="1">Single-pass membrane protein</topology>
    </subcellularLocation>
</comment>
<comment type="similarity">
    <text evidence="1">Belongs to the PsbN family.</text>
</comment>
<comment type="caution">
    <text evidence="1">Originally thought to be a component of PSII; based on experiments in Synechocystis, N.tabacum and barley, and its absence from PSII in T.elongatus and T.vulcanus, this is probably not true.</text>
</comment>
<sequence>METATLVAISISGLLVSFTGYALYTAFGQPSQQLRDPFEEHGD</sequence>
<gene>
    <name evidence="1" type="primary">psbN</name>
</gene>
<protein>
    <recommendedName>
        <fullName evidence="1">Protein PsbN</fullName>
    </recommendedName>
</protein>
<name>PSBN_OENPA</name>
<organism>
    <name type="scientific">Oenothera parviflora</name>
    <name type="common">Small-flowered evening primrose</name>
    <name type="synonym">Oenothera cruciata</name>
    <dbReference type="NCBI Taxonomy" id="482429"/>
    <lineage>
        <taxon>Eukaryota</taxon>
        <taxon>Viridiplantae</taxon>
        <taxon>Streptophyta</taxon>
        <taxon>Embryophyta</taxon>
        <taxon>Tracheophyta</taxon>
        <taxon>Spermatophyta</taxon>
        <taxon>Magnoliopsida</taxon>
        <taxon>eudicotyledons</taxon>
        <taxon>Gunneridae</taxon>
        <taxon>Pentapetalae</taxon>
        <taxon>rosids</taxon>
        <taxon>malvids</taxon>
        <taxon>Myrtales</taxon>
        <taxon>Onagraceae</taxon>
        <taxon>Onagroideae</taxon>
        <taxon>Onagreae</taxon>
        <taxon>Oenothera</taxon>
    </lineage>
</organism>
<feature type="chain" id="PRO_0000362209" description="Protein PsbN">
    <location>
        <begin position="1"/>
        <end position="43"/>
    </location>
</feature>
<feature type="transmembrane region" description="Helical" evidence="1">
    <location>
        <begin position="5"/>
        <end position="27"/>
    </location>
</feature>
<dbReference type="EMBL" id="EU262891">
    <property type="protein sequence ID" value="ABX10149.1"/>
    <property type="molecule type" value="Genomic_DNA"/>
</dbReference>
<dbReference type="RefSeq" id="YP_001687479.1">
    <property type="nucleotide sequence ID" value="NC_010362.1"/>
</dbReference>
<dbReference type="SMR" id="B0Z5F6"/>
<dbReference type="GeneID" id="5955408"/>
<dbReference type="GO" id="GO:0009535">
    <property type="term" value="C:chloroplast thylakoid membrane"/>
    <property type="evidence" value="ECO:0007669"/>
    <property type="project" value="UniProtKB-SubCell"/>
</dbReference>
<dbReference type="GO" id="GO:0015979">
    <property type="term" value="P:photosynthesis"/>
    <property type="evidence" value="ECO:0007669"/>
    <property type="project" value="InterPro"/>
</dbReference>
<dbReference type="HAMAP" id="MF_00293">
    <property type="entry name" value="PSII_PsbN"/>
    <property type="match status" value="1"/>
</dbReference>
<dbReference type="InterPro" id="IPR003398">
    <property type="entry name" value="PSII_PsbN"/>
</dbReference>
<dbReference type="PANTHER" id="PTHR35326">
    <property type="entry name" value="PROTEIN PSBN"/>
    <property type="match status" value="1"/>
</dbReference>
<dbReference type="PANTHER" id="PTHR35326:SF3">
    <property type="entry name" value="PROTEIN PSBN"/>
    <property type="match status" value="1"/>
</dbReference>
<dbReference type="Pfam" id="PF02468">
    <property type="entry name" value="PsbN"/>
    <property type="match status" value="1"/>
</dbReference>
<accession>B0Z5F6</accession>
<reference key="1">
    <citation type="journal article" date="2008" name="Nucleic Acids Res.">
        <title>The complete nucleotide sequences of the five genetically distinct plastid genomes of Oenothera, subsection Oenothera: I. Sequence evaluation and plastome evolution.</title>
        <authorList>
            <person name="Greiner S."/>
            <person name="Wang X."/>
            <person name="Rauwolf U."/>
            <person name="Silber M.V."/>
            <person name="Mayer K."/>
            <person name="Meurer J."/>
            <person name="Haberer G."/>
            <person name="Herrmann R.G."/>
        </authorList>
    </citation>
    <scope>NUCLEOTIDE SEQUENCE [LARGE SCALE GENOMIC DNA]</scope>
    <source>
        <strain>cv. Atrovirens</strain>
    </source>
</reference>
<geneLocation type="chloroplast"/>
<keyword id="KW-0150">Chloroplast</keyword>
<keyword id="KW-0472">Membrane</keyword>
<keyword id="KW-0934">Plastid</keyword>
<keyword id="KW-0793">Thylakoid</keyword>
<keyword id="KW-0812">Transmembrane</keyword>
<keyword id="KW-1133">Transmembrane helix</keyword>